<accession>Q6CM95</accession>
<gene>
    <name type="primary">SUB2</name>
    <name type="ordered locus">KLLA0E22033g</name>
</gene>
<reference key="1">
    <citation type="journal article" date="2004" name="Nature">
        <title>Genome evolution in yeasts.</title>
        <authorList>
            <person name="Dujon B."/>
            <person name="Sherman D."/>
            <person name="Fischer G."/>
            <person name="Durrens P."/>
            <person name="Casaregola S."/>
            <person name="Lafontaine I."/>
            <person name="de Montigny J."/>
            <person name="Marck C."/>
            <person name="Neuveglise C."/>
            <person name="Talla E."/>
            <person name="Goffard N."/>
            <person name="Frangeul L."/>
            <person name="Aigle M."/>
            <person name="Anthouard V."/>
            <person name="Babour A."/>
            <person name="Barbe V."/>
            <person name="Barnay S."/>
            <person name="Blanchin S."/>
            <person name="Beckerich J.-M."/>
            <person name="Beyne E."/>
            <person name="Bleykasten C."/>
            <person name="Boisrame A."/>
            <person name="Boyer J."/>
            <person name="Cattolico L."/>
            <person name="Confanioleri F."/>
            <person name="de Daruvar A."/>
            <person name="Despons L."/>
            <person name="Fabre E."/>
            <person name="Fairhead C."/>
            <person name="Ferry-Dumazet H."/>
            <person name="Groppi A."/>
            <person name="Hantraye F."/>
            <person name="Hennequin C."/>
            <person name="Jauniaux N."/>
            <person name="Joyet P."/>
            <person name="Kachouri R."/>
            <person name="Kerrest A."/>
            <person name="Koszul R."/>
            <person name="Lemaire M."/>
            <person name="Lesur I."/>
            <person name="Ma L."/>
            <person name="Muller H."/>
            <person name="Nicaud J.-M."/>
            <person name="Nikolski M."/>
            <person name="Oztas S."/>
            <person name="Ozier-Kalogeropoulos O."/>
            <person name="Pellenz S."/>
            <person name="Potier S."/>
            <person name="Richard G.-F."/>
            <person name="Straub M.-L."/>
            <person name="Suleau A."/>
            <person name="Swennen D."/>
            <person name="Tekaia F."/>
            <person name="Wesolowski-Louvel M."/>
            <person name="Westhof E."/>
            <person name="Wirth B."/>
            <person name="Zeniou-Meyer M."/>
            <person name="Zivanovic Y."/>
            <person name="Bolotin-Fukuhara M."/>
            <person name="Thierry A."/>
            <person name="Bouchier C."/>
            <person name="Caudron B."/>
            <person name="Scarpelli C."/>
            <person name="Gaillardin C."/>
            <person name="Weissenbach J."/>
            <person name="Wincker P."/>
            <person name="Souciet J.-L."/>
        </authorList>
    </citation>
    <scope>NUCLEOTIDE SEQUENCE [LARGE SCALE GENOMIC DNA]</scope>
    <source>
        <strain>ATCC 8585 / CBS 2359 / DSM 70799 / NBRC 1267 / NRRL Y-1140 / WM37</strain>
    </source>
</reference>
<organism>
    <name type="scientific">Kluyveromyces lactis (strain ATCC 8585 / CBS 2359 / DSM 70799 / NBRC 1267 / NRRL Y-1140 / WM37)</name>
    <name type="common">Yeast</name>
    <name type="synonym">Candida sphaerica</name>
    <dbReference type="NCBI Taxonomy" id="284590"/>
    <lineage>
        <taxon>Eukaryota</taxon>
        <taxon>Fungi</taxon>
        <taxon>Dikarya</taxon>
        <taxon>Ascomycota</taxon>
        <taxon>Saccharomycotina</taxon>
        <taxon>Saccharomycetes</taxon>
        <taxon>Saccharomycetales</taxon>
        <taxon>Saccharomycetaceae</taxon>
        <taxon>Kluyveromyces</taxon>
    </lineage>
</organism>
<comment type="function">
    <text evidence="1">ATP-binding RNA helicase involved in transcription elongation and required for the export of mRNA out of the nucleus. SUB2 also plays a role in pre-mRNA splicing and spliceosome assembly. May be involved in rDNA and telomeric silencing, and maintenance of genome integrity (By similarity).</text>
</comment>
<comment type="catalytic activity">
    <reaction>
        <text>ATP + H2O = ADP + phosphate + H(+)</text>
        <dbReference type="Rhea" id="RHEA:13065"/>
        <dbReference type="ChEBI" id="CHEBI:15377"/>
        <dbReference type="ChEBI" id="CHEBI:15378"/>
        <dbReference type="ChEBI" id="CHEBI:30616"/>
        <dbReference type="ChEBI" id="CHEBI:43474"/>
        <dbReference type="ChEBI" id="CHEBI:456216"/>
        <dbReference type="EC" id="3.6.4.13"/>
    </reaction>
</comment>
<comment type="subcellular location">
    <subcellularLocation>
        <location evidence="1">Nucleus</location>
    </subcellularLocation>
</comment>
<comment type="domain">
    <text>The Q motif is unique to and characteristic of the DEAD box family of RNA helicases and controls ATP binding and hydrolysis.</text>
</comment>
<comment type="similarity">
    <text evidence="5">Belongs to the DEAD box helicase family. DECD subfamily.</text>
</comment>
<proteinExistence type="inferred from homology"/>
<keyword id="KW-0067">ATP-binding</keyword>
<keyword id="KW-0347">Helicase</keyword>
<keyword id="KW-0378">Hydrolase</keyword>
<keyword id="KW-0507">mRNA processing</keyword>
<keyword id="KW-0508">mRNA splicing</keyword>
<keyword id="KW-0509">mRNA transport</keyword>
<keyword id="KW-0547">Nucleotide-binding</keyword>
<keyword id="KW-0539">Nucleus</keyword>
<keyword id="KW-1185">Reference proteome</keyword>
<keyword id="KW-0694">RNA-binding</keyword>
<keyword id="KW-0747">Spliceosome</keyword>
<keyword id="KW-0813">Transport</keyword>
<dbReference type="EC" id="3.6.4.13"/>
<dbReference type="EMBL" id="CR382125">
    <property type="protein sequence ID" value="CAH00031.1"/>
    <property type="molecule type" value="Genomic_DNA"/>
</dbReference>
<dbReference type="RefSeq" id="XP_454944.1">
    <property type="nucleotide sequence ID" value="XM_454944.1"/>
</dbReference>
<dbReference type="SMR" id="Q6CM95"/>
<dbReference type="FunCoup" id="Q6CM95">
    <property type="interactions" value="1352"/>
</dbReference>
<dbReference type="STRING" id="284590.Q6CM95"/>
<dbReference type="PaxDb" id="284590-Q6CM95"/>
<dbReference type="KEGG" id="kla:KLLA0_E21935g"/>
<dbReference type="eggNOG" id="KOG0329">
    <property type="taxonomic scope" value="Eukaryota"/>
</dbReference>
<dbReference type="HOGENOM" id="CLU_003041_1_0_1"/>
<dbReference type="InParanoid" id="Q6CM95"/>
<dbReference type="OMA" id="YAHVEPK"/>
<dbReference type="Proteomes" id="UP000000598">
    <property type="component" value="Chromosome E"/>
</dbReference>
<dbReference type="GO" id="GO:0005681">
    <property type="term" value="C:spliceosomal complex"/>
    <property type="evidence" value="ECO:0007669"/>
    <property type="project" value="UniProtKB-KW"/>
</dbReference>
<dbReference type="GO" id="GO:0005524">
    <property type="term" value="F:ATP binding"/>
    <property type="evidence" value="ECO:0007669"/>
    <property type="project" value="UniProtKB-KW"/>
</dbReference>
<dbReference type="GO" id="GO:0016887">
    <property type="term" value="F:ATP hydrolysis activity"/>
    <property type="evidence" value="ECO:0007669"/>
    <property type="project" value="RHEA"/>
</dbReference>
<dbReference type="GO" id="GO:0003723">
    <property type="term" value="F:RNA binding"/>
    <property type="evidence" value="ECO:0007669"/>
    <property type="project" value="UniProtKB-KW"/>
</dbReference>
<dbReference type="GO" id="GO:0003724">
    <property type="term" value="F:RNA helicase activity"/>
    <property type="evidence" value="ECO:0007669"/>
    <property type="project" value="UniProtKB-EC"/>
</dbReference>
<dbReference type="GO" id="GO:0006397">
    <property type="term" value="P:mRNA processing"/>
    <property type="evidence" value="ECO:0007669"/>
    <property type="project" value="UniProtKB-KW"/>
</dbReference>
<dbReference type="GO" id="GO:0051028">
    <property type="term" value="P:mRNA transport"/>
    <property type="evidence" value="ECO:0007669"/>
    <property type="project" value="UniProtKB-KW"/>
</dbReference>
<dbReference type="GO" id="GO:0008380">
    <property type="term" value="P:RNA splicing"/>
    <property type="evidence" value="ECO:0007669"/>
    <property type="project" value="UniProtKB-KW"/>
</dbReference>
<dbReference type="CDD" id="cd17950">
    <property type="entry name" value="DEADc_DDX39"/>
    <property type="match status" value="1"/>
</dbReference>
<dbReference type="CDD" id="cd18787">
    <property type="entry name" value="SF2_C_DEAD"/>
    <property type="match status" value="1"/>
</dbReference>
<dbReference type="FunFam" id="3.40.50.300:FF:000809">
    <property type="entry name" value="ATP-dependent RNA helicase SUB2"/>
    <property type="match status" value="1"/>
</dbReference>
<dbReference type="FunFam" id="3.40.50.300:FF:000111">
    <property type="entry name" value="DEAD-box ATP-dependent RNA helicase"/>
    <property type="match status" value="1"/>
</dbReference>
<dbReference type="Gene3D" id="3.40.50.300">
    <property type="entry name" value="P-loop containing nucleotide triphosphate hydrolases"/>
    <property type="match status" value="2"/>
</dbReference>
<dbReference type="InterPro" id="IPR011545">
    <property type="entry name" value="DEAD/DEAH_box_helicase_dom"/>
</dbReference>
<dbReference type="InterPro" id="IPR014001">
    <property type="entry name" value="Helicase_ATP-bd"/>
</dbReference>
<dbReference type="InterPro" id="IPR001650">
    <property type="entry name" value="Helicase_C-like"/>
</dbReference>
<dbReference type="InterPro" id="IPR027417">
    <property type="entry name" value="P-loop_NTPase"/>
</dbReference>
<dbReference type="InterPro" id="IPR014014">
    <property type="entry name" value="RNA_helicase_DEAD_Q_motif"/>
</dbReference>
<dbReference type="PANTHER" id="PTHR47958">
    <property type="entry name" value="ATP-DEPENDENT RNA HELICASE DBP3"/>
    <property type="match status" value="1"/>
</dbReference>
<dbReference type="Pfam" id="PF00270">
    <property type="entry name" value="DEAD"/>
    <property type="match status" value="1"/>
</dbReference>
<dbReference type="Pfam" id="PF00271">
    <property type="entry name" value="Helicase_C"/>
    <property type="match status" value="1"/>
</dbReference>
<dbReference type="SMART" id="SM00487">
    <property type="entry name" value="DEXDc"/>
    <property type="match status" value="1"/>
</dbReference>
<dbReference type="SMART" id="SM00490">
    <property type="entry name" value="HELICc"/>
    <property type="match status" value="1"/>
</dbReference>
<dbReference type="SUPFAM" id="SSF52540">
    <property type="entry name" value="P-loop containing nucleoside triphosphate hydrolases"/>
    <property type="match status" value="1"/>
</dbReference>
<dbReference type="PROSITE" id="PS51192">
    <property type="entry name" value="HELICASE_ATP_BIND_1"/>
    <property type="match status" value="1"/>
</dbReference>
<dbReference type="PROSITE" id="PS51194">
    <property type="entry name" value="HELICASE_CTER"/>
    <property type="match status" value="1"/>
</dbReference>
<dbReference type="PROSITE" id="PS51195">
    <property type="entry name" value="Q_MOTIF"/>
    <property type="match status" value="1"/>
</dbReference>
<evidence type="ECO:0000250" key="1"/>
<evidence type="ECO:0000255" key="2">
    <source>
        <dbReference type="PROSITE-ProRule" id="PRU00541"/>
    </source>
</evidence>
<evidence type="ECO:0000255" key="3">
    <source>
        <dbReference type="PROSITE-ProRule" id="PRU00542"/>
    </source>
</evidence>
<evidence type="ECO:0000256" key="4">
    <source>
        <dbReference type="SAM" id="MobiDB-lite"/>
    </source>
</evidence>
<evidence type="ECO:0000305" key="5"/>
<sequence>MSHEAEEDLLEYSDNEQEVQVDNKATEVNAEGNGESQAKDSDKKGSYVGIHSTGFKDFLLKPELSRAIIDCGFEHPSEVQQHTIPQSIHGTDVLCQAKSGLGKTAVFVLSTLQQLDPVQGEVSVVVLCNARELAYQIRNEYLRFSKYMPDVKTAVFYGGTEYKNDIDLLSKKETVPHIIVATPGRLKALVRDKHIDLSHVKNFVIDECDKVLEELDMRRDVQDIFRATPRDKQVMMFSATLSQEIRPICRRFLQNPLEIFVDDEAKLTLHGLQQYYIKLNEKEKNRKLAQLLDDLEFNQVIIFVKSTVRANELTKLLNASNFPAITVHGHMKQEERIARYKAFKEFEKRICVSTDVFGRGIDIERINLAINYDMPNEADQYLHRVGRAGRFGTKGLAISMISSEDDEQVLAKIQERFDVKITEFPEEGVDPSTYLNT</sequence>
<feature type="chain" id="PRO_0000232266" description="ATP-dependent RNA helicase SUB2">
    <location>
        <begin position="1"/>
        <end position="437"/>
    </location>
</feature>
<feature type="domain" description="Helicase ATP-binding" evidence="2">
    <location>
        <begin position="84"/>
        <end position="259"/>
    </location>
</feature>
<feature type="domain" description="Helicase C-terminal" evidence="3">
    <location>
        <begin position="287"/>
        <end position="432"/>
    </location>
</feature>
<feature type="region of interest" description="Disordered" evidence="4">
    <location>
        <begin position="1"/>
        <end position="45"/>
    </location>
</feature>
<feature type="short sequence motif" description="Q motif">
    <location>
        <begin position="53"/>
        <end position="81"/>
    </location>
</feature>
<feature type="short sequence motif" description="DECD box">
    <location>
        <begin position="206"/>
        <end position="209"/>
    </location>
</feature>
<feature type="compositionally biased region" description="Acidic residues" evidence="4">
    <location>
        <begin position="1"/>
        <end position="19"/>
    </location>
</feature>
<feature type="binding site" evidence="2">
    <location>
        <begin position="97"/>
        <end position="104"/>
    </location>
    <ligand>
        <name>ATP</name>
        <dbReference type="ChEBI" id="CHEBI:30616"/>
    </ligand>
</feature>
<protein>
    <recommendedName>
        <fullName>ATP-dependent RNA helicase SUB2</fullName>
        <ecNumber>3.6.4.13</ecNumber>
    </recommendedName>
</protein>
<name>SUB2_KLULA</name>